<comment type="function">
    <text evidence="2">Regulates the expression of the mymA operon (Rv3083-Rv3089).</text>
</comment>
<comment type="induction">
    <text evidence="2">Induced at acidic pH. Negatively autoregulated.</text>
</comment>
<comment type="PTM">
    <text evidence="4">Phosphorylated by PknK. Phosphorylation increases affinity for the mymA promoter.</text>
</comment>
<comment type="disruption phenotype">
    <text evidence="2 3">Mutant displays altered colony morphology and cell wall structure, reduced contents and altered composition of mycolic acids along with the accumulation of saturated C24 and C26 fatty acids, and enhanced susceptibility to antibiotics, detergents and acidic pH. Also impairs ability to survive in activated macrophages, but not in resting macrophages.</text>
</comment>
<accession>P9WMJ3</accession>
<accession>L0TBI3</accession>
<accession>O53299</accession>
<accession>Q06861</accession>
<gene>
    <name type="primary">virS</name>
    <name type="ordered locus">Rv3082c</name>
    <name type="ORF">MTV013.03c</name>
</gene>
<name>VIRS_MYCTU</name>
<dbReference type="EMBL" id="X68281">
    <property type="protein sequence ID" value="CAA48342.1"/>
    <property type="molecule type" value="Genomic_DNA"/>
</dbReference>
<dbReference type="EMBL" id="AL123456">
    <property type="protein sequence ID" value="CCP45891.1"/>
    <property type="molecule type" value="Genomic_DNA"/>
</dbReference>
<dbReference type="PIR" id="F70852">
    <property type="entry name" value="F70852"/>
</dbReference>
<dbReference type="RefSeq" id="NP_217598.1">
    <property type="nucleotide sequence ID" value="NC_000962.3"/>
</dbReference>
<dbReference type="RefSeq" id="WP_003416068.1">
    <property type="nucleotide sequence ID" value="NZ_NVQJ01000011.1"/>
</dbReference>
<dbReference type="PDB" id="8RCW">
    <property type="method" value="X-ray"/>
    <property type="resolution" value="1.69 A"/>
    <property type="chains" value="A/B=2-230"/>
</dbReference>
<dbReference type="PDBsum" id="8RCW"/>
<dbReference type="SMR" id="P9WMJ3"/>
<dbReference type="STRING" id="83332.Rv3082c"/>
<dbReference type="PaxDb" id="83332-Rv3082c"/>
<dbReference type="DNASU" id="888657"/>
<dbReference type="GeneID" id="888657"/>
<dbReference type="KEGG" id="mtu:Rv3082c"/>
<dbReference type="KEGG" id="mtv:RVBD_3082c"/>
<dbReference type="TubercuList" id="Rv3082c"/>
<dbReference type="eggNOG" id="COG2207">
    <property type="taxonomic scope" value="Bacteria"/>
</dbReference>
<dbReference type="InParanoid" id="P9WMJ3"/>
<dbReference type="OrthoDB" id="5241536at2"/>
<dbReference type="PhylomeDB" id="P9WMJ3"/>
<dbReference type="Proteomes" id="UP000001584">
    <property type="component" value="Chromosome"/>
</dbReference>
<dbReference type="GO" id="GO:0005829">
    <property type="term" value="C:cytosol"/>
    <property type="evidence" value="ECO:0007005"/>
    <property type="project" value="MTBBASE"/>
</dbReference>
<dbReference type="GO" id="GO:0003700">
    <property type="term" value="F:DNA-binding transcription factor activity"/>
    <property type="evidence" value="ECO:0000318"/>
    <property type="project" value="GO_Central"/>
</dbReference>
<dbReference type="GO" id="GO:0000976">
    <property type="term" value="F:transcription cis-regulatory region binding"/>
    <property type="evidence" value="ECO:0000318"/>
    <property type="project" value="GO_Central"/>
</dbReference>
<dbReference type="GO" id="GO:0071468">
    <property type="term" value="P:cellular response to acidic pH"/>
    <property type="evidence" value="ECO:0000270"/>
    <property type="project" value="MTBBASE"/>
</dbReference>
<dbReference type="GO" id="GO:0045893">
    <property type="term" value="P:positive regulation of DNA-templated transcription"/>
    <property type="evidence" value="ECO:0000314"/>
    <property type="project" value="MTBBASE"/>
</dbReference>
<dbReference type="Gene3D" id="1.10.10.60">
    <property type="entry name" value="Homeodomain-like"/>
    <property type="match status" value="1"/>
</dbReference>
<dbReference type="InterPro" id="IPR032687">
    <property type="entry name" value="AraC-type_N"/>
</dbReference>
<dbReference type="InterPro" id="IPR009057">
    <property type="entry name" value="Homeodomain-like_sf"/>
</dbReference>
<dbReference type="InterPro" id="IPR018060">
    <property type="entry name" value="HTH_AraC"/>
</dbReference>
<dbReference type="PANTHER" id="PTHR47894">
    <property type="entry name" value="HTH-TYPE TRANSCRIPTIONAL REGULATOR GADX"/>
    <property type="match status" value="1"/>
</dbReference>
<dbReference type="PANTHER" id="PTHR47894:SF4">
    <property type="entry name" value="HTH-TYPE TRANSCRIPTIONAL REGULATOR GADX"/>
    <property type="match status" value="1"/>
</dbReference>
<dbReference type="Pfam" id="PF12625">
    <property type="entry name" value="Arabinose_bd"/>
    <property type="match status" value="1"/>
</dbReference>
<dbReference type="Pfam" id="PF12833">
    <property type="entry name" value="HTH_18"/>
    <property type="match status" value="1"/>
</dbReference>
<dbReference type="SMART" id="SM00342">
    <property type="entry name" value="HTH_ARAC"/>
    <property type="match status" value="1"/>
</dbReference>
<dbReference type="SUPFAM" id="SSF46689">
    <property type="entry name" value="Homeodomain-like"/>
    <property type="match status" value="1"/>
</dbReference>
<dbReference type="PROSITE" id="PS01124">
    <property type="entry name" value="HTH_ARAC_FAMILY_2"/>
    <property type="match status" value="1"/>
</dbReference>
<proteinExistence type="evidence at protein level"/>
<sequence>MELGSLIRATNLWGYTDLMRELGADPLPFLRRFDIPPGIEHQEDAFMSLAGFVRMLEASAAELDCPDFGLRLARWQGLGILGPVAVIARNAATLFGGLEAIGRYLYVHSPALTLTVSSTTARSNVRFGYEVTEPGIPYPLQGYELSMANAARMIRLLGGPQARARVFSFRHAQLGTDAAYREALGCTVRFGRTWCGFEVDHRLAGRPIDHADPETKRIATKYLESQYLPSDATLSERVVGLARRLLPTGQCSAEAIADQLDMHPRTLQRRLAAEGLRCHDLIERERRAQAARYLAQPGLYLSQIAVLLGYSEQSALNRSCRRWFGMTPRQYRAYGGVSGR</sequence>
<protein>
    <recommendedName>
        <fullName>HTH-type transcriptional regulator VirS</fullName>
    </recommendedName>
    <alternativeName>
        <fullName>Virulence-regulating protein VirS</fullName>
    </alternativeName>
</protein>
<organism>
    <name type="scientific">Mycobacterium tuberculosis (strain ATCC 25618 / H37Rv)</name>
    <dbReference type="NCBI Taxonomy" id="83332"/>
    <lineage>
        <taxon>Bacteria</taxon>
        <taxon>Bacillati</taxon>
        <taxon>Actinomycetota</taxon>
        <taxon>Actinomycetes</taxon>
        <taxon>Mycobacteriales</taxon>
        <taxon>Mycobacteriaceae</taxon>
        <taxon>Mycobacterium</taxon>
        <taxon>Mycobacterium tuberculosis complex</taxon>
    </lineage>
</organism>
<feature type="chain" id="PRO_0000194592" description="HTH-type transcriptional regulator VirS">
    <location>
        <begin position="1"/>
        <end position="340"/>
    </location>
</feature>
<feature type="domain" description="HTH araC/xylS-type" evidence="1">
    <location>
        <begin position="236"/>
        <end position="334"/>
    </location>
</feature>
<feature type="DNA-binding region" description="H-T-H motif" evidence="1">
    <location>
        <begin position="254"/>
        <end position="275"/>
    </location>
</feature>
<feature type="DNA-binding region" description="H-T-H motif" evidence="1">
    <location>
        <begin position="301"/>
        <end position="324"/>
    </location>
</feature>
<feature type="sequence conflict" description="In Ref. 1; CAA48342." evidence="5" ref="1">
    <original>EL</original>
    <variation>DV</variation>
    <location>
        <begin position="21"/>
        <end position="22"/>
    </location>
</feature>
<feature type="sequence conflict" description="In Ref. 1; CAA48342." evidence="5" ref="1">
    <original>PQAR</original>
    <variation>RSG</variation>
    <location>
        <begin position="160"/>
        <end position="163"/>
    </location>
</feature>
<feature type="sequence conflict" description="In Ref. 1; CAA48342." evidence="5" ref="1">
    <original>L</original>
    <variation>R</variation>
    <location>
        <position position="316"/>
    </location>
</feature>
<keyword id="KW-0002">3D-structure</keyword>
<keyword id="KW-0238">DNA-binding</keyword>
<keyword id="KW-0597">Phosphoprotein</keyword>
<keyword id="KW-1185">Reference proteome</keyword>
<keyword id="KW-0804">Transcription</keyword>
<keyword id="KW-0805">Transcription regulation</keyword>
<keyword id="KW-0843">Virulence</keyword>
<reference key="1">
    <citation type="journal article" date="1993" name="Gene">
        <title>Sequence of a newly identified Mycobacterium tuberculosis gene encoding a protein with sequence homology to virulence-regulating proteins.</title>
        <authorList>
            <person name="Gupta S."/>
            <person name="Tyagi A.K."/>
        </authorList>
    </citation>
    <scope>NUCLEOTIDE SEQUENCE [GENOMIC DNA]</scope>
    <source>
        <strain>ATCC 25618 / H37Rv</strain>
    </source>
</reference>
<reference key="2">
    <citation type="journal article" date="1998" name="Nature">
        <title>Deciphering the biology of Mycobacterium tuberculosis from the complete genome sequence.</title>
        <authorList>
            <person name="Cole S.T."/>
            <person name="Brosch R."/>
            <person name="Parkhill J."/>
            <person name="Garnier T."/>
            <person name="Churcher C.M."/>
            <person name="Harris D.E."/>
            <person name="Gordon S.V."/>
            <person name="Eiglmeier K."/>
            <person name="Gas S."/>
            <person name="Barry C.E. III"/>
            <person name="Tekaia F."/>
            <person name="Badcock K."/>
            <person name="Basham D."/>
            <person name="Brown D."/>
            <person name="Chillingworth T."/>
            <person name="Connor R."/>
            <person name="Davies R.M."/>
            <person name="Devlin K."/>
            <person name="Feltwell T."/>
            <person name="Gentles S."/>
            <person name="Hamlin N."/>
            <person name="Holroyd S."/>
            <person name="Hornsby T."/>
            <person name="Jagels K."/>
            <person name="Krogh A."/>
            <person name="McLean J."/>
            <person name="Moule S."/>
            <person name="Murphy L.D."/>
            <person name="Oliver S."/>
            <person name="Osborne J."/>
            <person name="Quail M.A."/>
            <person name="Rajandream M.A."/>
            <person name="Rogers J."/>
            <person name="Rutter S."/>
            <person name="Seeger K."/>
            <person name="Skelton S."/>
            <person name="Squares S."/>
            <person name="Squares R."/>
            <person name="Sulston J.E."/>
            <person name="Taylor K."/>
            <person name="Whitehead S."/>
            <person name="Barrell B.G."/>
        </authorList>
    </citation>
    <scope>NUCLEOTIDE SEQUENCE [LARGE SCALE GENOMIC DNA]</scope>
    <source>
        <strain>ATCC 25618 / H37Rv</strain>
    </source>
</reference>
<reference key="3">
    <citation type="journal article" date="2003" name="FEMS Microbiol. Lett.">
        <title>mymA operon of Mycobacterium tuberculosis: its regulation and importance in the cell envelope.</title>
        <authorList>
            <person name="Singh A."/>
            <person name="Jain S."/>
            <person name="Gupta S."/>
            <person name="Das T."/>
            <person name="Tyagi A.K."/>
        </authorList>
    </citation>
    <scope>FUNCTION</scope>
    <scope>INDUCTION</scope>
    <scope>DISRUPTION PHENOTYPE</scope>
</reference>
<reference key="4">
    <citation type="journal article" date="2005" name="J. Bacteriol.">
        <title>Requirement of the mymA operon for appropriate cell wall ultrastructure and persistence of Mycobacterium tuberculosis in the spleens of guinea pigs.</title>
        <authorList>
            <person name="Singh A."/>
            <person name="Gupta R."/>
            <person name="Vishwakarma R.A."/>
            <person name="Narayanan P.R."/>
            <person name="Paramasivan C.N."/>
            <person name="Ramanathan V.D."/>
            <person name="Tyagi A.K."/>
        </authorList>
    </citation>
    <scope>DISRUPTION PHENOTYPE</scope>
    <source>
        <strain>Erdman</strain>
    </source>
</reference>
<reference key="5">
    <citation type="journal article" date="2009" name="J. Biol. Chem.">
        <title>The Mycobacterium tuberculosis protein kinase K modulates activation of transcription from the promoter of mycobacterial monooxygenase operon through phosphorylation of the transcriptional regulator VirS.</title>
        <authorList>
            <person name="Kumar P."/>
            <person name="Kumar D."/>
            <person name="Parikh A."/>
            <person name="Rananaware D."/>
            <person name="Gupta M."/>
            <person name="Singh Y."/>
            <person name="Nandicoori V.K."/>
        </authorList>
    </citation>
    <scope>PHOSPHORYLATION</scope>
    <scope>DNA-BINDING</scope>
    <source>
        <strain>ATCC 25618 / H37Rv</strain>
    </source>
</reference>
<evidence type="ECO:0000255" key="1">
    <source>
        <dbReference type="PROSITE-ProRule" id="PRU00593"/>
    </source>
</evidence>
<evidence type="ECO:0000269" key="2">
    <source>
    </source>
</evidence>
<evidence type="ECO:0000269" key="3">
    <source>
    </source>
</evidence>
<evidence type="ECO:0000269" key="4">
    <source>
    </source>
</evidence>
<evidence type="ECO:0000305" key="5"/>